<comment type="function">
    <text evidence="1">Catalyzes the reversible interconversion of serine and glycine with tetrahydrofolate (THF) serving as the one-carbon carrier. Also exhibits THF-independent aldolase activity toward beta-hydroxyamino acids, producing glycine and aldehydes, via a retro-aldol mechanism.</text>
</comment>
<comment type="catalytic activity">
    <reaction evidence="1">
        <text>(6R)-5,10-methylene-5,6,7,8-tetrahydrofolate + glycine + H2O = (6S)-5,6,7,8-tetrahydrofolate + L-serine</text>
        <dbReference type="Rhea" id="RHEA:15481"/>
        <dbReference type="ChEBI" id="CHEBI:15377"/>
        <dbReference type="ChEBI" id="CHEBI:15636"/>
        <dbReference type="ChEBI" id="CHEBI:33384"/>
        <dbReference type="ChEBI" id="CHEBI:57305"/>
        <dbReference type="ChEBI" id="CHEBI:57453"/>
        <dbReference type="EC" id="2.1.2.1"/>
    </reaction>
</comment>
<comment type="cofactor">
    <cofactor evidence="1">
        <name>pyridoxal 5'-phosphate</name>
        <dbReference type="ChEBI" id="CHEBI:597326"/>
    </cofactor>
</comment>
<comment type="pathway">
    <text evidence="1">One-carbon metabolism; tetrahydrofolate interconversion.</text>
</comment>
<comment type="pathway">
    <text evidence="1">Amino-acid biosynthesis; glycine biosynthesis; glycine from L-serine: step 1/1.</text>
</comment>
<comment type="subunit">
    <text evidence="1">Homodimer.</text>
</comment>
<comment type="subcellular location">
    <subcellularLocation>
        <location evidence="1">Cytoplasm</location>
    </subcellularLocation>
</comment>
<comment type="similarity">
    <text evidence="1">Belongs to the SHMT family.</text>
</comment>
<protein>
    <recommendedName>
        <fullName evidence="1">Serine hydroxymethyltransferase</fullName>
        <shortName evidence="1">SHMT</shortName>
        <shortName evidence="1">Serine methylase</shortName>
        <ecNumber evidence="1">2.1.2.1</ecNumber>
    </recommendedName>
</protein>
<gene>
    <name evidence="1" type="primary">glyA</name>
    <name type="ordered locus">UNCMA_12910</name>
    <name type="ORF">RCIX1736</name>
</gene>
<keyword id="KW-0028">Amino-acid biosynthesis</keyword>
<keyword id="KW-0963">Cytoplasm</keyword>
<keyword id="KW-0554">One-carbon metabolism</keyword>
<keyword id="KW-0663">Pyridoxal phosphate</keyword>
<keyword id="KW-1185">Reference proteome</keyword>
<keyword id="KW-0808">Transferase</keyword>
<proteinExistence type="inferred from homology"/>
<sequence>MLNPDVKTIVDAVEGSQDLFRHSLPMIASENVTSPMVRKVLSSDLGHRYAEGQVGHRFYQGCGFVDVIEGKAIELAKEIFRAPHVNVQPVSGVNCNIAAFFALADPGDKLMALAVPSGGHISHAKFSAAGIRGLKIYTHPYDNQIMNIDVDRMIKQIREIRPRVVMFGASLFLFPHPVKEAREVCDEVGASIVYDGAHVLGLIAGGQFQDPLREGADVVTGSTHKTFPGPQGGIILCKEKFAKDIDEAVFPGTVSNAHLHHKAGLAITLAEMKAFGKQYAAQIVKNSQALGAAMDDLGFNVLCKDLGYTKSHQIAVDVSKIGGGSVLASKLERANIITNKNLFPWDDVNTTDNPSGLRLGTQELTRLGMNEPEMKEVAKFIKRVAIDKEEPEKVKKDVVHFKSQYQAVKYCFDGDGAYEFSLR</sequence>
<organism>
    <name type="scientific">Methanocella arvoryzae (strain DSM 22066 / NBRC 105507 / MRE50)</name>
    <dbReference type="NCBI Taxonomy" id="351160"/>
    <lineage>
        <taxon>Archaea</taxon>
        <taxon>Methanobacteriati</taxon>
        <taxon>Methanobacteriota</taxon>
        <taxon>Stenosarchaea group</taxon>
        <taxon>Methanomicrobia</taxon>
        <taxon>Methanocellales</taxon>
        <taxon>Methanocellaceae</taxon>
        <taxon>Methanocella</taxon>
    </lineage>
</organism>
<feature type="chain" id="PRO_0000369979" description="Serine hydroxymethyltransferase">
    <location>
        <begin position="1"/>
        <end position="423"/>
    </location>
</feature>
<feature type="binding site" evidence="1">
    <location>
        <begin position="119"/>
        <end position="121"/>
    </location>
    <ligand>
        <name>(6S)-5,6,7,8-tetrahydrofolate</name>
        <dbReference type="ChEBI" id="CHEBI:57453"/>
    </ligand>
</feature>
<feature type="site" description="Plays an important role in substrate specificity" evidence="1">
    <location>
        <position position="224"/>
    </location>
</feature>
<feature type="modified residue" description="N6-(pyridoxal phosphate)lysine" evidence="1">
    <location>
        <position position="225"/>
    </location>
</feature>
<accession>Q0W3U6</accession>
<evidence type="ECO:0000255" key="1">
    <source>
        <dbReference type="HAMAP-Rule" id="MF_00051"/>
    </source>
</evidence>
<dbReference type="EC" id="2.1.2.1" evidence="1"/>
<dbReference type="EMBL" id="AM114193">
    <property type="protein sequence ID" value="CAJ36947.1"/>
    <property type="molecule type" value="Genomic_DNA"/>
</dbReference>
<dbReference type="RefSeq" id="WP_012035619.1">
    <property type="nucleotide sequence ID" value="NC_009464.1"/>
</dbReference>
<dbReference type="SMR" id="Q0W3U6"/>
<dbReference type="STRING" id="351160.RCIX1736"/>
<dbReference type="GeneID" id="5143689"/>
<dbReference type="KEGG" id="rci:RCIX1736"/>
<dbReference type="PATRIC" id="fig|351160.9.peg.1327"/>
<dbReference type="eggNOG" id="arCOG00070">
    <property type="taxonomic scope" value="Archaea"/>
</dbReference>
<dbReference type="OrthoDB" id="5821at2157"/>
<dbReference type="UniPathway" id="UPA00193"/>
<dbReference type="UniPathway" id="UPA00288">
    <property type="reaction ID" value="UER01023"/>
</dbReference>
<dbReference type="Proteomes" id="UP000000663">
    <property type="component" value="Chromosome"/>
</dbReference>
<dbReference type="GO" id="GO:0005737">
    <property type="term" value="C:cytoplasm"/>
    <property type="evidence" value="ECO:0007669"/>
    <property type="project" value="UniProtKB-SubCell"/>
</dbReference>
<dbReference type="GO" id="GO:0004372">
    <property type="term" value="F:glycine hydroxymethyltransferase activity"/>
    <property type="evidence" value="ECO:0007669"/>
    <property type="project" value="UniProtKB-UniRule"/>
</dbReference>
<dbReference type="GO" id="GO:0030170">
    <property type="term" value="F:pyridoxal phosphate binding"/>
    <property type="evidence" value="ECO:0007669"/>
    <property type="project" value="UniProtKB-UniRule"/>
</dbReference>
<dbReference type="GO" id="GO:0019264">
    <property type="term" value="P:glycine biosynthetic process from serine"/>
    <property type="evidence" value="ECO:0007669"/>
    <property type="project" value="UniProtKB-UniRule"/>
</dbReference>
<dbReference type="GO" id="GO:0035999">
    <property type="term" value="P:tetrahydrofolate interconversion"/>
    <property type="evidence" value="ECO:0007669"/>
    <property type="project" value="UniProtKB-UniRule"/>
</dbReference>
<dbReference type="CDD" id="cd00378">
    <property type="entry name" value="SHMT"/>
    <property type="match status" value="1"/>
</dbReference>
<dbReference type="FunFam" id="3.40.640.10:FF:000101">
    <property type="entry name" value="Serine hydroxymethyltransferase"/>
    <property type="match status" value="1"/>
</dbReference>
<dbReference type="FunFam" id="3.90.1150.10:FF:000114">
    <property type="entry name" value="Serine hydroxymethyltransferase"/>
    <property type="match status" value="1"/>
</dbReference>
<dbReference type="Gene3D" id="3.90.1150.10">
    <property type="entry name" value="Aspartate Aminotransferase, domain 1"/>
    <property type="match status" value="1"/>
</dbReference>
<dbReference type="Gene3D" id="3.40.640.10">
    <property type="entry name" value="Type I PLP-dependent aspartate aminotransferase-like (Major domain)"/>
    <property type="match status" value="1"/>
</dbReference>
<dbReference type="HAMAP" id="MF_00051">
    <property type="entry name" value="SHMT"/>
    <property type="match status" value="1"/>
</dbReference>
<dbReference type="InterPro" id="IPR015424">
    <property type="entry name" value="PyrdxlP-dep_Trfase"/>
</dbReference>
<dbReference type="InterPro" id="IPR015421">
    <property type="entry name" value="PyrdxlP-dep_Trfase_major"/>
</dbReference>
<dbReference type="InterPro" id="IPR015422">
    <property type="entry name" value="PyrdxlP-dep_Trfase_small"/>
</dbReference>
<dbReference type="InterPro" id="IPR001085">
    <property type="entry name" value="Ser_HO-MeTrfase"/>
</dbReference>
<dbReference type="InterPro" id="IPR049943">
    <property type="entry name" value="Ser_HO-MeTrfase-like"/>
</dbReference>
<dbReference type="InterPro" id="IPR019798">
    <property type="entry name" value="Ser_HO-MeTrfase_PLP_BS"/>
</dbReference>
<dbReference type="InterPro" id="IPR039429">
    <property type="entry name" value="SHMT-like_dom"/>
</dbReference>
<dbReference type="NCBIfam" id="NF000586">
    <property type="entry name" value="PRK00011.1"/>
    <property type="match status" value="1"/>
</dbReference>
<dbReference type="PANTHER" id="PTHR11680">
    <property type="entry name" value="SERINE HYDROXYMETHYLTRANSFERASE"/>
    <property type="match status" value="1"/>
</dbReference>
<dbReference type="PANTHER" id="PTHR11680:SF35">
    <property type="entry name" value="SERINE HYDROXYMETHYLTRANSFERASE 1"/>
    <property type="match status" value="1"/>
</dbReference>
<dbReference type="Pfam" id="PF00464">
    <property type="entry name" value="SHMT"/>
    <property type="match status" value="1"/>
</dbReference>
<dbReference type="PIRSF" id="PIRSF000412">
    <property type="entry name" value="SHMT"/>
    <property type="match status" value="1"/>
</dbReference>
<dbReference type="SUPFAM" id="SSF53383">
    <property type="entry name" value="PLP-dependent transferases"/>
    <property type="match status" value="1"/>
</dbReference>
<dbReference type="PROSITE" id="PS00096">
    <property type="entry name" value="SHMT"/>
    <property type="match status" value="1"/>
</dbReference>
<name>GLYA_METAR</name>
<reference key="1">
    <citation type="journal article" date="2006" name="Science">
        <title>Genome of rice cluster I archaea -- the key methane producers in the rice rhizosphere.</title>
        <authorList>
            <person name="Erkel C."/>
            <person name="Kube M."/>
            <person name="Reinhardt R."/>
            <person name="Liesack W."/>
        </authorList>
    </citation>
    <scope>NUCLEOTIDE SEQUENCE [LARGE SCALE GENOMIC DNA]</scope>
    <source>
        <strain>DSM 22066 / NBRC 105507 / MRE50</strain>
    </source>
</reference>